<dbReference type="EC" id="2.7.11.1" evidence="2"/>
<dbReference type="EMBL" id="AL590445">
    <property type="protein sequence ID" value="CAD26671.1"/>
    <property type="molecule type" value="Genomic_DNA"/>
</dbReference>
<dbReference type="RefSeq" id="NP_597494.1">
    <property type="nucleotide sequence ID" value="NM_001041360.1"/>
</dbReference>
<dbReference type="SMR" id="Q8SRU0"/>
<dbReference type="FunCoup" id="Q8SRU0">
    <property type="interactions" value="244"/>
</dbReference>
<dbReference type="STRING" id="284813.Q8SRU0"/>
<dbReference type="GeneID" id="859161"/>
<dbReference type="KEGG" id="ecu:ECU05_1510"/>
<dbReference type="VEuPathDB" id="MicrosporidiaDB:ECU05_1510"/>
<dbReference type="HOGENOM" id="CLU_000288_70_4_1"/>
<dbReference type="InParanoid" id="Q8SRU0"/>
<dbReference type="OMA" id="ECHMIEW"/>
<dbReference type="OrthoDB" id="10254671at2759"/>
<dbReference type="Proteomes" id="UP000000819">
    <property type="component" value="Chromosome V"/>
</dbReference>
<dbReference type="GO" id="GO:0005829">
    <property type="term" value="C:cytosol"/>
    <property type="evidence" value="ECO:0007669"/>
    <property type="project" value="TreeGrafter"/>
</dbReference>
<dbReference type="GO" id="GO:0005634">
    <property type="term" value="C:nucleus"/>
    <property type="evidence" value="ECO:0007669"/>
    <property type="project" value="TreeGrafter"/>
</dbReference>
<dbReference type="GO" id="GO:0005956">
    <property type="term" value="C:protein kinase CK2 complex"/>
    <property type="evidence" value="ECO:0007669"/>
    <property type="project" value="TreeGrafter"/>
</dbReference>
<dbReference type="GO" id="GO:0005524">
    <property type="term" value="F:ATP binding"/>
    <property type="evidence" value="ECO:0007669"/>
    <property type="project" value="UniProtKB-KW"/>
</dbReference>
<dbReference type="GO" id="GO:0106310">
    <property type="term" value="F:protein serine kinase activity"/>
    <property type="evidence" value="ECO:0007669"/>
    <property type="project" value="RHEA"/>
</dbReference>
<dbReference type="GO" id="GO:0004674">
    <property type="term" value="F:protein serine/threonine kinase activity"/>
    <property type="evidence" value="ECO:0007669"/>
    <property type="project" value="UniProtKB-KW"/>
</dbReference>
<dbReference type="GO" id="GO:0051726">
    <property type="term" value="P:regulation of cell cycle"/>
    <property type="evidence" value="ECO:0007669"/>
    <property type="project" value="TreeGrafter"/>
</dbReference>
<dbReference type="CDD" id="cd14132">
    <property type="entry name" value="STKc_CK2_alpha"/>
    <property type="match status" value="1"/>
</dbReference>
<dbReference type="FunFam" id="1.10.510.10:FF:000459">
    <property type="entry name" value="Casein kinase II subunit alpha"/>
    <property type="match status" value="1"/>
</dbReference>
<dbReference type="FunFam" id="3.30.200.20:FF:000088">
    <property type="entry name" value="Casein kinase II subunit alpha"/>
    <property type="match status" value="1"/>
</dbReference>
<dbReference type="Gene3D" id="3.30.200.20">
    <property type="entry name" value="Phosphorylase Kinase, domain 1"/>
    <property type="match status" value="2"/>
</dbReference>
<dbReference type="Gene3D" id="1.10.510.10">
    <property type="entry name" value="Transferase(Phosphotransferase) domain 1"/>
    <property type="match status" value="1"/>
</dbReference>
<dbReference type="InterPro" id="IPR045216">
    <property type="entry name" value="CK2_alpha"/>
</dbReference>
<dbReference type="InterPro" id="IPR011009">
    <property type="entry name" value="Kinase-like_dom_sf"/>
</dbReference>
<dbReference type="InterPro" id="IPR000719">
    <property type="entry name" value="Prot_kinase_dom"/>
</dbReference>
<dbReference type="InterPro" id="IPR008271">
    <property type="entry name" value="Ser/Thr_kinase_AS"/>
</dbReference>
<dbReference type="PANTHER" id="PTHR24054">
    <property type="entry name" value="CASEIN KINASE II SUBUNIT ALPHA"/>
    <property type="match status" value="1"/>
</dbReference>
<dbReference type="PANTHER" id="PTHR24054:SF0">
    <property type="entry name" value="CASEIN KINASE II SUBUNIT ALPHA"/>
    <property type="match status" value="1"/>
</dbReference>
<dbReference type="Pfam" id="PF00069">
    <property type="entry name" value="Pkinase"/>
    <property type="match status" value="1"/>
</dbReference>
<dbReference type="SMART" id="SM00220">
    <property type="entry name" value="S_TKc"/>
    <property type="match status" value="1"/>
</dbReference>
<dbReference type="SUPFAM" id="SSF56112">
    <property type="entry name" value="Protein kinase-like (PK-like)"/>
    <property type="match status" value="1"/>
</dbReference>
<dbReference type="PROSITE" id="PS50011">
    <property type="entry name" value="PROTEIN_KINASE_DOM"/>
    <property type="match status" value="1"/>
</dbReference>
<dbReference type="PROSITE" id="PS00108">
    <property type="entry name" value="PROTEIN_KINASE_ST"/>
    <property type="match status" value="1"/>
</dbReference>
<feature type="chain" id="PRO_0000385507" description="Probable casein kinase II subunit alpha homolog">
    <location>
        <begin position="1"/>
        <end position="319"/>
    </location>
</feature>
<feature type="domain" description="Protein kinase" evidence="3">
    <location>
        <begin position="37"/>
        <end position="316"/>
    </location>
</feature>
<feature type="active site" description="Proton acceptor" evidence="3 4">
    <location>
        <position position="151"/>
    </location>
</feature>
<feature type="binding site" evidence="3">
    <location>
        <begin position="43"/>
        <end position="51"/>
    </location>
    <ligand>
        <name>ATP</name>
        <dbReference type="ChEBI" id="CHEBI:30616"/>
    </ligand>
</feature>
<feature type="binding site" evidence="3">
    <location>
        <position position="64"/>
    </location>
    <ligand>
        <name>ATP</name>
        <dbReference type="ChEBI" id="CHEBI:30616"/>
    </ligand>
</feature>
<organism>
    <name type="scientific">Encephalitozoon cuniculi (strain GB-M1)</name>
    <name type="common">Microsporidian parasite</name>
    <dbReference type="NCBI Taxonomy" id="284813"/>
    <lineage>
        <taxon>Eukaryota</taxon>
        <taxon>Fungi</taxon>
        <taxon>Fungi incertae sedis</taxon>
        <taxon>Microsporidia</taxon>
        <taxon>Unikaryonidae</taxon>
        <taxon>Encephalitozoon</taxon>
    </lineage>
</organism>
<keyword id="KW-0067">ATP-binding</keyword>
<keyword id="KW-0418">Kinase</keyword>
<keyword id="KW-0547">Nucleotide-binding</keyword>
<keyword id="KW-1185">Reference proteome</keyword>
<keyword id="KW-0723">Serine/threonine-protein kinase</keyword>
<keyword id="KW-0808">Transferase</keyword>
<reference key="1">
    <citation type="journal article" date="2001" name="Nature">
        <title>Genome sequence and gene compaction of the eukaryote parasite Encephalitozoon cuniculi.</title>
        <authorList>
            <person name="Katinka M.D."/>
            <person name="Duprat S."/>
            <person name="Cornillot E."/>
            <person name="Metenier G."/>
            <person name="Thomarat F."/>
            <person name="Prensier G."/>
            <person name="Barbe V."/>
            <person name="Peyretaillade E."/>
            <person name="Brottier P."/>
            <person name="Wincker P."/>
            <person name="Delbac F."/>
            <person name="El Alaoui H."/>
            <person name="Peyret P."/>
            <person name="Saurin W."/>
            <person name="Gouy M."/>
            <person name="Weissenbach J."/>
            <person name="Vivares C.P."/>
        </authorList>
    </citation>
    <scope>NUCLEOTIDE SEQUENCE [LARGE SCALE GENOMIC DNA]</scope>
    <source>
        <strain>GB-M1</strain>
    </source>
</reference>
<reference key="2">
    <citation type="journal article" date="2007" name="BMC Genomics">
        <title>The complement of protein kinases of the microsporidium Encephalitozoon cuniculi in relation to those of Saccharomyces cerevisiae and Schizosaccharomyces pombe.</title>
        <authorList>
            <person name="Miranda-Saavedra D."/>
            <person name="Stark M.J.R."/>
            <person name="Packer J.C."/>
            <person name="Vivares C.P."/>
            <person name="Doerig C."/>
            <person name="Barton G.J."/>
        </authorList>
    </citation>
    <scope>PREDICTION OF FUNCTION</scope>
</reference>
<comment type="function">
    <text evidence="2">Catalytic subunit of a constitutively active serine/threonine-protein kinase complex that phosphorylates a large number of substrates containing acidic residues C-terminal to the phosphorylated serine or threonine.</text>
</comment>
<comment type="catalytic activity">
    <reaction evidence="2">
        <text>L-seryl-[protein] + ATP = O-phospho-L-seryl-[protein] + ADP + H(+)</text>
        <dbReference type="Rhea" id="RHEA:17989"/>
        <dbReference type="Rhea" id="RHEA-COMP:9863"/>
        <dbReference type="Rhea" id="RHEA-COMP:11604"/>
        <dbReference type="ChEBI" id="CHEBI:15378"/>
        <dbReference type="ChEBI" id="CHEBI:29999"/>
        <dbReference type="ChEBI" id="CHEBI:30616"/>
        <dbReference type="ChEBI" id="CHEBI:83421"/>
        <dbReference type="ChEBI" id="CHEBI:456216"/>
        <dbReference type="EC" id="2.7.11.1"/>
    </reaction>
</comment>
<comment type="catalytic activity">
    <reaction evidence="2">
        <text>L-threonyl-[protein] + ATP = O-phospho-L-threonyl-[protein] + ADP + H(+)</text>
        <dbReference type="Rhea" id="RHEA:46608"/>
        <dbReference type="Rhea" id="RHEA-COMP:11060"/>
        <dbReference type="Rhea" id="RHEA-COMP:11605"/>
        <dbReference type="ChEBI" id="CHEBI:15378"/>
        <dbReference type="ChEBI" id="CHEBI:30013"/>
        <dbReference type="ChEBI" id="CHEBI:30616"/>
        <dbReference type="ChEBI" id="CHEBI:61977"/>
        <dbReference type="ChEBI" id="CHEBI:456216"/>
        <dbReference type="EC" id="2.7.11.1"/>
    </reaction>
</comment>
<comment type="subunit">
    <text evidence="1">Tetramer composed of two alpha chains, one beta chain and one beta' chain.</text>
</comment>
<comment type="similarity">
    <text evidence="3">Belongs to the protein kinase superfamily. Ser/Thr protein kinase family. CK2 subfamily.</text>
</comment>
<accession>Q8SRU0</accession>
<name>CSK2A_ENCCU</name>
<evidence type="ECO:0000250" key="1">
    <source>
        <dbReference type="UniProtKB" id="P15790"/>
    </source>
</evidence>
<evidence type="ECO:0000250" key="2">
    <source>
        <dbReference type="UniProtKB" id="P68400"/>
    </source>
</evidence>
<evidence type="ECO:0000255" key="3">
    <source>
        <dbReference type="PROSITE-ProRule" id="PRU00159"/>
    </source>
</evidence>
<evidence type="ECO:0000255" key="4">
    <source>
        <dbReference type="PROSITE-ProRule" id="PRU10027"/>
    </source>
</evidence>
<gene>
    <name type="primary">CKA1</name>
    <name type="ordered locus">ECU05_1510</name>
</gene>
<protein>
    <recommendedName>
        <fullName>Probable casein kinase II subunit alpha homolog</fullName>
        <shortName>CK II subunit alpha</shortName>
        <ecNumber evidence="2">2.7.11.1</ecNumber>
    </recommendedName>
</protein>
<sequence length="319" mass="37688">MVVVTVARSNADVNEKKDERYWNYECYTITTGSIEKYQIYQRMGRGKYSEVFEGRKDREKIVIKALKPVRKAKICREVLILRNLSHKNIIKLMDVVVDPESQIYSLIFEYIEHEDYAKIFEKLCYKDIVEYSRQILSALSYCHSMGIIHRDIKPQNMVINQARRELKIIDWGLAEFYHPKKEYSVRVASRYYKGPELLVDYPYYDYSLDIWSFGCVLAELVFKKRPFFHGESNSDQLVKIARILGYTHLKKYVRKYKMAPLNPKYEGVGERVLLSSFTPPGKTGLYTNAIDLLEKILIYDHQDRPTADECLRHPLFESR</sequence>
<proteinExistence type="inferred from homology"/>